<reference key="1">
    <citation type="submission" date="2004-11" db="EMBL/GenBank/DDBJ databases">
        <authorList>
            <consortium name="The German cDNA consortium"/>
        </authorList>
    </citation>
    <scope>NUCLEOTIDE SEQUENCE [LARGE SCALE MRNA]</scope>
    <source>
        <tissue>Kidney</tissue>
    </source>
</reference>
<organism>
    <name type="scientific">Pongo abelii</name>
    <name type="common">Sumatran orangutan</name>
    <name type="synonym">Pongo pygmaeus abelii</name>
    <dbReference type="NCBI Taxonomy" id="9601"/>
    <lineage>
        <taxon>Eukaryota</taxon>
        <taxon>Metazoa</taxon>
        <taxon>Chordata</taxon>
        <taxon>Craniata</taxon>
        <taxon>Vertebrata</taxon>
        <taxon>Euteleostomi</taxon>
        <taxon>Mammalia</taxon>
        <taxon>Eutheria</taxon>
        <taxon>Euarchontoglires</taxon>
        <taxon>Primates</taxon>
        <taxon>Haplorrhini</taxon>
        <taxon>Catarrhini</taxon>
        <taxon>Hominidae</taxon>
        <taxon>Pongo</taxon>
    </lineage>
</organism>
<proteinExistence type="evidence at transcript level"/>
<sequence length="738" mass="84785">MTSSGPGPRFLLLLPLLLPPAASASDRPRGRDPVNPEKLLVITVATAETEGYLRFLRSAEFFNYTVRTLGLGEEWRGGDVARTVGGGQKVRWLKKEMEKYADREDMIIMFVDSYDVILAGSPTELLKKFVQSGSRLLFSAESFCWPEWGLAEQYPEVGTGKRFLNSGGFIGFATTIHQIVRQWKYKDDDDDQLFYTRLYLDPGLREKLSLNLDHKSRIFQNLNGALDEVVLKFDRNRVRIRNVAYDTLPVVVHGNGPTKLQLNYLGNYVPKGWTPEGGCGFCNQDRRTLPGGQPPPRVFLAVFVEQPTPFLPRFLQRLLLLDYPPDRVTLFLHNNEVFHEPHIADSWPQLQDHFSAVKLVGPEEALSPGEARDMAMDLCRQDPECEFYFSLDADTVLTNLQTLRILIEENRKVIAPMLSRHGKLWSNFWGALSPDEYYARSEDYVELVQRKRVGVWNVPYISQAYVIRGDTLRTELPQRDVFSGSDTDPDMAFCKSFRDKGIFLHLSNQHEFGRLLATSRYDTEHLHPDLWQIFDNPVDWKEQYIHENYSRALEGEGIVEQPCPDVYWFPLLSEQMCDELVAEMEHYGQWSGGRHEDSRLAGGYENVPTVDIHMKQVGYEDQWLQLLRTYVGPMTESLFPGYHTKARAVMNFVVRYRPDEQPSLRPHHDSSTFTLNVALNHKGLDYEGGGCRFLRYDCVISSPRKGWALLHPGRLTHYHEGLPTTWGTRYIMVSFVDP</sequence>
<dbReference type="EC" id="1.14.11.4" evidence="1"/>
<dbReference type="EC" id="2.4.1.50" evidence="1"/>
<dbReference type="EC" id="2.4.1.66" evidence="1"/>
<dbReference type="EMBL" id="CR860483">
    <property type="protein sequence ID" value="CAH92605.1"/>
    <property type="molecule type" value="mRNA"/>
</dbReference>
<dbReference type="RefSeq" id="NP_001128871.1">
    <property type="nucleotide sequence ID" value="NM_001135399.1"/>
</dbReference>
<dbReference type="SMR" id="Q5R6K5"/>
<dbReference type="FunCoup" id="Q5R6K5">
    <property type="interactions" value="980"/>
</dbReference>
<dbReference type="STRING" id="9601.ENSPPYP00000019555"/>
<dbReference type="GlyCosmos" id="Q5R6K5">
    <property type="glycosylation" value="2 sites, No reported glycans"/>
</dbReference>
<dbReference type="Ensembl" id="ENSPPYT00000020326.2">
    <property type="protein sequence ID" value="ENSPPYP00000019555.2"/>
    <property type="gene ID" value="ENSPPYG00000017444.2"/>
</dbReference>
<dbReference type="GeneID" id="100189797"/>
<dbReference type="KEGG" id="pon:100189797"/>
<dbReference type="CTD" id="8985"/>
<dbReference type="eggNOG" id="KOG1971">
    <property type="taxonomic scope" value="Eukaryota"/>
</dbReference>
<dbReference type="GeneTree" id="ENSGT01030000234558"/>
<dbReference type="InParanoid" id="Q5R6K5"/>
<dbReference type="OMA" id="ETMEDCG"/>
<dbReference type="OrthoDB" id="69177at2759"/>
<dbReference type="Proteomes" id="UP000001595">
    <property type="component" value="Chromosome 7"/>
</dbReference>
<dbReference type="GO" id="GO:0005783">
    <property type="term" value="C:endoplasmic reticulum"/>
    <property type="evidence" value="ECO:0000250"/>
    <property type="project" value="UniProtKB"/>
</dbReference>
<dbReference type="GO" id="GO:0005788">
    <property type="term" value="C:endoplasmic reticulum lumen"/>
    <property type="evidence" value="ECO:0007669"/>
    <property type="project" value="UniProtKB-SubCell"/>
</dbReference>
<dbReference type="GO" id="GO:0005789">
    <property type="term" value="C:endoplasmic reticulum membrane"/>
    <property type="evidence" value="ECO:0007669"/>
    <property type="project" value="UniProtKB-SubCell"/>
</dbReference>
<dbReference type="GO" id="GO:0005615">
    <property type="term" value="C:extracellular space"/>
    <property type="evidence" value="ECO:0000250"/>
    <property type="project" value="UniProtKB"/>
</dbReference>
<dbReference type="GO" id="GO:0005791">
    <property type="term" value="C:rough endoplasmic reticulum"/>
    <property type="evidence" value="ECO:0007669"/>
    <property type="project" value="UniProtKB-SubCell"/>
</dbReference>
<dbReference type="GO" id="GO:0005802">
    <property type="term" value="C:trans-Golgi network"/>
    <property type="evidence" value="ECO:0007669"/>
    <property type="project" value="Ensembl"/>
</dbReference>
<dbReference type="GO" id="GO:0005506">
    <property type="term" value="F:iron ion binding"/>
    <property type="evidence" value="ECO:0007669"/>
    <property type="project" value="InterPro"/>
</dbReference>
<dbReference type="GO" id="GO:0031418">
    <property type="term" value="F:L-ascorbic acid binding"/>
    <property type="evidence" value="ECO:0007669"/>
    <property type="project" value="UniProtKB-KW"/>
</dbReference>
<dbReference type="GO" id="GO:0050211">
    <property type="term" value="F:procollagen galactosyltransferase activity"/>
    <property type="evidence" value="ECO:0000250"/>
    <property type="project" value="UniProtKB"/>
</dbReference>
<dbReference type="GO" id="GO:0033823">
    <property type="term" value="F:procollagen glucosyltransferase activity"/>
    <property type="evidence" value="ECO:0000250"/>
    <property type="project" value="UniProtKB"/>
</dbReference>
<dbReference type="GO" id="GO:0008475">
    <property type="term" value="F:procollagen-lysine 5-dioxygenase activity"/>
    <property type="evidence" value="ECO:0000250"/>
    <property type="project" value="UniProtKB"/>
</dbReference>
<dbReference type="GO" id="GO:0070831">
    <property type="term" value="P:basement membrane assembly"/>
    <property type="evidence" value="ECO:0007669"/>
    <property type="project" value="Ensembl"/>
</dbReference>
<dbReference type="GO" id="GO:0030199">
    <property type="term" value="P:collagen fibril organization"/>
    <property type="evidence" value="ECO:0007669"/>
    <property type="project" value="Ensembl"/>
</dbReference>
<dbReference type="GO" id="GO:0032963">
    <property type="term" value="P:collagen metabolic process"/>
    <property type="evidence" value="ECO:0007669"/>
    <property type="project" value="Ensembl"/>
</dbReference>
<dbReference type="GO" id="GO:0001886">
    <property type="term" value="P:endothelial cell morphogenesis"/>
    <property type="evidence" value="ECO:0007669"/>
    <property type="project" value="Ensembl"/>
</dbReference>
<dbReference type="GO" id="GO:0048730">
    <property type="term" value="P:epidermis morphogenesis"/>
    <property type="evidence" value="ECO:0007669"/>
    <property type="project" value="Ensembl"/>
</dbReference>
<dbReference type="GO" id="GO:0046947">
    <property type="term" value="P:hydroxylysine biosynthetic process"/>
    <property type="evidence" value="ECO:0007669"/>
    <property type="project" value="Ensembl"/>
</dbReference>
<dbReference type="GO" id="GO:0001701">
    <property type="term" value="P:in utero embryonic development"/>
    <property type="evidence" value="ECO:0007669"/>
    <property type="project" value="Ensembl"/>
</dbReference>
<dbReference type="GO" id="GO:0060425">
    <property type="term" value="P:lung morphogenesis"/>
    <property type="evidence" value="ECO:0007669"/>
    <property type="project" value="Ensembl"/>
</dbReference>
<dbReference type="GO" id="GO:0021915">
    <property type="term" value="P:neural tube development"/>
    <property type="evidence" value="ECO:0007669"/>
    <property type="project" value="Ensembl"/>
</dbReference>
<dbReference type="GO" id="GO:0017185">
    <property type="term" value="P:peptidyl-lysine hydroxylation"/>
    <property type="evidence" value="ECO:0000250"/>
    <property type="project" value="UniProtKB"/>
</dbReference>
<dbReference type="GO" id="GO:0008104">
    <property type="term" value="P:protein localization"/>
    <property type="evidence" value="ECO:0007669"/>
    <property type="project" value="Ensembl"/>
</dbReference>
<dbReference type="GO" id="GO:0006493">
    <property type="term" value="P:protein O-linked glycosylation"/>
    <property type="evidence" value="ECO:0007669"/>
    <property type="project" value="Ensembl"/>
</dbReference>
<dbReference type="GO" id="GO:0042311">
    <property type="term" value="P:vasodilation"/>
    <property type="evidence" value="ECO:0007669"/>
    <property type="project" value="Ensembl"/>
</dbReference>
<dbReference type="CDD" id="cd23002">
    <property type="entry name" value="GT_LH3"/>
    <property type="match status" value="1"/>
</dbReference>
<dbReference type="FunFam" id="2.60.120.620:FF:000004">
    <property type="entry name" value="Procollagen-lysine,2-oxoglutarate 5-dioxygenase 2"/>
    <property type="match status" value="1"/>
</dbReference>
<dbReference type="Gene3D" id="2.60.120.620">
    <property type="entry name" value="q2cbj1_9rhob like domain"/>
    <property type="match status" value="1"/>
</dbReference>
<dbReference type="InterPro" id="IPR050757">
    <property type="entry name" value="Collagen_mod_GT25"/>
</dbReference>
<dbReference type="InterPro" id="IPR044861">
    <property type="entry name" value="IPNS-like_FE2OG_OXY"/>
</dbReference>
<dbReference type="InterPro" id="IPR029044">
    <property type="entry name" value="Nucleotide-diphossugar_trans"/>
</dbReference>
<dbReference type="InterPro" id="IPR005123">
    <property type="entry name" value="Oxoglu/Fe-dep_dioxygenase_dom"/>
</dbReference>
<dbReference type="InterPro" id="IPR006620">
    <property type="entry name" value="Pro_4_hyd_alph"/>
</dbReference>
<dbReference type="InterPro" id="IPR001006">
    <property type="entry name" value="Procol_lys_dOase"/>
</dbReference>
<dbReference type="PANTHER" id="PTHR10730:SF7">
    <property type="entry name" value="MULTIFUNCTIONAL PROCOLLAGEN LYSINE HYDROXYLASE AND GLYCOSYLTRANSFERASE LH3"/>
    <property type="match status" value="1"/>
</dbReference>
<dbReference type="PANTHER" id="PTHR10730">
    <property type="entry name" value="PROCOLLAGEN-LYSINE,2-OXOGLUTARATE 5-DIOXYGENASE/GLYCOSYLTRANSFERASE 25 FAMILY MEMBER"/>
    <property type="match status" value="1"/>
</dbReference>
<dbReference type="Pfam" id="PF03171">
    <property type="entry name" value="2OG-FeII_Oxy"/>
    <property type="match status" value="1"/>
</dbReference>
<dbReference type="Pfam" id="PF25342">
    <property type="entry name" value="GT_PLOD"/>
    <property type="match status" value="1"/>
</dbReference>
<dbReference type="SMART" id="SM00702">
    <property type="entry name" value="P4Hc"/>
    <property type="match status" value="1"/>
</dbReference>
<dbReference type="SUPFAM" id="SSF53448">
    <property type="entry name" value="Nucleotide-diphospho-sugar transferases"/>
    <property type="match status" value="1"/>
</dbReference>
<dbReference type="PROSITE" id="PS51471">
    <property type="entry name" value="FE2OG_OXY"/>
    <property type="match status" value="1"/>
</dbReference>
<dbReference type="PROSITE" id="PS01325">
    <property type="entry name" value="LYS_HYDROXYLASE"/>
    <property type="match status" value="1"/>
</dbReference>
<name>PLOD3_PONAB</name>
<comment type="function">
    <text evidence="1 2">Multifunctional enzyme that catalyzes a series of post-translational modifications on Lys residues in procollagen. Plays a redundant role in catalyzing the formation of hydroxylysine residues in -Xaa-Lys-Gly- sequences in collagens (By similarity). Plays a redundant role in catalyzing the transfer of galactose onto hydroxylysine groups, giving rise to galactosyl 5-hydroxylysine (By similarity). Has an essential role by catalyzing the subsequent transfer of glucose moieties, giving rise to 1,2-glucosylgalactosyl-5-hydroxylysine residues. Catalyzes hydroxylation and glycosylation of Lys residues in the MBL1 collagen-like domain, giving rise to hydroxylysine and 1,2-glucosylgalactosyl-5-hydroxylysine residues. Catalyzes hydroxylation and glycosylation of Lys residues in the ADIPOQ collagen-like domain, giving rise to hydroxylysine and 1,2-glucosylgalactosyl-5-hydroxylysine residues. Essential for normal biosynthesis and secretion of type IV collagens. Essential for normal formation of basement membranes (By similarity).</text>
</comment>
<comment type="catalytic activity">
    <reaction evidence="1">
        <text>L-lysyl-[collagen] + 2-oxoglutarate + O2 = (5R)-5-hydroxy-L-lysyl-[collagen] + succinate + CO2</text>
        <dbReference type="Rhea" id="RHEA:16569"/>
        <dbReference type="Rhea" id="RHEA-COMP:12751"/>
        <dbReference type="Rhea" id="RHEA-COMP:12752"/>
        <dbReference type="ChEBI" id="CHEBI:15379"/>
        <dbReference type="ChEBI" id="CHEBI:16526"/>
        <dbReference type="ChEBI" id="CHEBI:16810"/>
        <dbReference type="ChEBI" id="CHEBI:29969"/>
        <dbReference type="ChEBI" id="CHEBI:30031"/>
        <dbReference type="ChEBI" id="CHEBI:133442"/>
        <dbReference type="EC" id="1.14.11.4"/>
    </reaction>
</comment>
<comment type="catalytic activity">
    <reaction evidence="1">
        <text>(5R)-5-hydroxy-L-lysyl-[collagen] + UDP-alpha-D-galactose = (5R)-5-O-(beta-D-galactosyl)-5-hydroxy-L-lysyl-[collagen] + UDP + H(+)</text>
        <dbReference type="Rhea" id="RHEA:12637"/>
        <dbReference type="Rhea" id="RHEA-COMP:12752"/>
        <dbReference type="Rhea" id="RHEA-COMP:12753"/>
        <dbReference type="ChEBI" id="CHEBI:15378"/>
        <dbReference type="ChEBI" id="CHEBI:58223"/>
        <dbReference type="ChEBI" id="CHEBI:66914"/>
        <dbReference type="ChEBI" id="CHEBI:133442"/>
        <dbReference type="ChEBI" id="CHEBI:133443"/>
        <dbReference type="EC" id="2.4.1.50"/>
    </reaction>
</comment>
<comment type="catalytic activity">
    <reaction evidence="1">
        <text>(5R)-5-O-(beta-D-galactosyl)-5-hydroxy-L-lysyl-[collagen] + UDP-alpha-D-glucose = (5R)-5-O-[alpha-D-glucosyl-(1-&gt;2)-beta-D-galactosyl]-5-hydroxy-L-lysyl-[collagen] + UDP + H(+)</text>
        <dbReference type="Rhea" id="RHEA:12576"/>
        <dbReference type="Rhea" id="RHEA-COMP:12753"/>
        <dbReference type="Rhea" id="RHEA-COMP:12754"/>
        <dbReference type="ChEBI" id="CHEBI:15378"/>
        <dbReference type="ChEBI" id="CHEBI:58223"/>
        <dbReference type="ChEBI" id="CHEBI:58885"/>
        <dbReference type="ChEBI" id="CHEBI:133443"/>
        <dbReference type="ChEBI" id="CHEBI:133452"/>
        <dbReference type="EC" id="2.4.1.66"/>
    </reaction>
</comment>
<comment type="cofactor">
    <cofactor evidence="1">
        <name>Fe(2+)</name>
        <dbReference type="ChEBI" id="CHEBI:29033"/>
    </cofactor>
</comment>
<comment type="cofactor">
    <cofactor evidence="1">
        <name>L-ascorbate</name>
        <dbReference type="ChEBI" id="CHEBI:38290"/>
    </cofactor>
</comment>
<comment type="cofactor">
    <cofactor evidence="1">
        <name>Mn(2+)</name>
        <dbReference type="ChEBI" id="CHEBI:29035"/>
    </cofactor>
</comment>
<comment type="subunit">
    <text evidence="1">Homodimer.</text>
</comment>
<comment type="subcellular location">
    <subcellularLocation>
        <location evidence="1">Rough endoplasmic reticulum</location>
    </subcellularLocation>
    <subcellularLocation>
        <location evidence="1">Endoplasmic reticulum lumen</location>
    </subcellularLocation>
    <subcellularLocation>
        <location evidence="2">Endoplasmic reticulum membrane</location>
        <topology evidence="2">Peripheral membrane protein</topology>
        <orientation evidence="2">Lumenal side</orientation>
    </subcellularLocation>
    <subcellularLocation>
        <location evidence="1">Secreted</location>
    </subcellularLocation>
    <subcellularLocation>
        <location evidence="2">Secreted</location>
        <location evidence="2">Extracellular space</location>
    </subcellularLocation>
    <text evidence="2">The majority of the secreted protein is associated with the extracellular matrix.</text>
</comment>
<comment type="domain">
    <text evidence="1">The N-terminal domain mediates glycosyltransferase activity.</text>
</comment>
<comment type="domain">
    <text evidence="1">The C-terminal domain that mediates lysyl hydroxylase activity is also important for homodimerization.</text>
</comment>
<keyword id="KW-0223">Dioxygenase</keyword>
<keyword id="KW-1015">Disulfide bond</keyword>
<keyword id="KW-0256">Endoplasmic reticulum</keyword>
<keyword id="KW-0325">Glycoprotein</keyword>
<keyword id="KW-0328">Glycosyltransferase</keyword>
<keyword id="KW-0408">Iron</keyword>
<keyword id="KW-0464">Manganese</keyword>
<keyword id="KW-0472">Membrane</keyword>
<keyword id="KW-0479">Metal-binding</keyword>
<keyword id="KW-0511">Multifunctional enzyme</keyword>
<keyword id="KW-0560">Oxidoreductase</keyword>
<keyword id="KW-1185">Reference proteome</keyword>
<keyword id="KW-0964">Secreted</keyword>
<keyword id="KW-0732">Signal</keyword>
<keyword id="KW-0808">Transferase</keyword>
<keyword id="KW-0847">Vitamin C</keyword>
<gene>
    <name type="primary">PLOD3</name>
</gene>
<accession>Q5R6K5</accession>
<evidence type="ECO:0000250" key="1">
    <source>
        <dbReference type="UniProtKB" id="O60568"/>
    </source>
</evidence>
<evidence type="ECO:0000250" key="2">
    <source>
        <dbReference type="UniProtKB" id="Q9R0E1"/>
    </source>
</evidence>
<evidence type="ECO:0000255" key="3"/>
<evidence type="ECO:0000255" key="4">
    <source>
        <dbReference type="PROSITE-ProRule" id="PRU00805"/>
    </source>
</evidence>
<feature type="signal peptide" evidence="3">
    <location>
        <begin position="1"/>
        <end position="24"/>
    </location>
</feature>
<feature type="chain" id="PRO_0000024688" description="Multifunctional procollagen lysine hydroxylase and glycosyltransferase LH3">
    <location>
        <begin position="25"/>
        <end position="738"/>
    </location>
</feature>
<feature type="domain" description="Fe2OG dioxygenase" evidence="4">
    <location>
        <begin position="647"/>
        <end position="738"/>
    </location>
</feature>
<feature type="region of interest" description="Required for glycosyltransferase activity" evidence="1">
    <location>
        <begin position="25"/>
        <end position="290"/>
    </location>
</feature>
<feature type="region of interest" description="Accessory region" evidence="1">
    <location>
        <begin position="295"/>
        <end position="520"/>
    </location>
</feature>
<feature type="region of interest" description="Important for dimerization" evidence="1">
    <location>
        <begin position="672"/>
        <end position="715"/>
    </location>
</feature>
<feature type="binding site" evidence="1">
    <location>
        <begin position="44"/>
        <end position="46"/>
    </location>
    <ligand>
        <name>UDP</name>
        <dbReference type="ChEBI" id="CHEBI:58223"/>
    </ligand>
</feature>
<feature type="binding site" evidence="1">
    <location>
        <begin position="112"/>
        <end position="114"/>
    </location>
    <ligand>
        <name>UDP</name>
        <dbReference type="ChEBI" id="CHEBI:58223"/>
    </ligand>
</feature>
<feature type="binding site" evidence="1">
    <location>
        <position position="112"/>
    </location>
    <ligand>
        <name>Mn(2+)</name>
        <dbReference type="ChEBI" id="CHEBI:29035"/>
    </ligand>
</feature>
<feature type="binding site" evidence="1">
    <location>
        <position position="115"/>
    </location>
    <ligand>
        <name>Mn(2+)</name>
        <dbReference type="ChEBI" id="CHEBI:29035"/>
    </ligand>
</feature>
<feature type="binding site" evidence="1">
    <location>
        <position position="253"/>
    </location>
    <ligand>
        <name>Mn(2+)</name>
        <dbReference type="ChEBI" id="CHEBI:29035"/>
    </ligand>
</feature>
<feature type="binding site" evidence="1">
    <location>
        <begin position="256"/>
        <end position="259"/>
    </location>
    <ligand>
        <name>UDP</name>
        <dbReference type="ChEBI" id="CHEBI:58223"/>
    </ligand>
</feature>
<feature type="binding site" evidence="1">
    <location>
        <position position="599"/>
    </location>
    <ligand>
        <name>2-oxoglutarate</name>
        <dbReference type="ChEBI" id="CHEBI:16810"/>
    </ligand>
</feature>
<feature type="binding site" evidence="1">
    <location>
        <position position="656"/>
    </location>
    <ligand>
        <name>2-oxoglutarate</name>
        <dbReference type="ChEBI" id="CHEBI:16810"/>
    </ligand>
</feature>
<feature type="binding site" evidence="4">
    <location>
        <position position="667"/>
    </location>
    <ligand>
        <name>Fe cation</name>
        <dbReference type="ChEBI" id="CHEBI:24875"/>
    </ligand>
</feature>
<feature type="binding site" evidence="4">
    <location>
        <position position="669"/>
    </location>
    <ligand>
        <name>Fe cation</name>
        <dbReference type="ChEBI" id="CHEBI:24875"/>
    </ligand>
</feature>
<feature type="binding site" evidence="1">
    <location>
        <position position="676"/>
    </location>
    <ligand>
        <name>2-oxoglutarate</name>
        <dbReference type="ChEBI" id="CHEBI:16810"/>
    </ligand>
</feature>
<feature type="binding site" evidence="4">
    <location>
        <position position="719"/>
    </location>
    <ligand>
        <name>Fe cation</name>
        <dbReference type="ChEBI" id="CHEBI:24875"/>
    </ligand>
</feature>
<feature type="binding site" evidence="1">
    <location>
        <position position="729"/>
    </location>
    <ligand>
        <name>2-oxoglutarate</name>
        <dbReference type="ChEBI" id="CHEBI:16810"/>
    </ligand>
</feature>
<feature type="glycosylation site" description="N-linked (GlcNAc...) asparagine" evidence="3">
    <location>
        <position position="63"/>
    </location>
</feature>
<feature type="glycosylation site" description="N-linked (GlcNAc...) asparagine" evidence="3">
    <location>
        <position position="548"/>
    </location>
</feature>
<feature type="disulfide bond" evidence="1">
    <location>
        <begin position="279"/>
        <end position="282"/>
    </location>
</feature>
<feature type="disulfide bond" evidence="1">
    <location>
        <begin position="379"/>
        <end position="385"/>
    </location>
</feature>
<feature type="disulfide bond" evidence="1">
    <location>
        <begin position="563"/>
        <end position="698"/>
    </location>
</feature>
<protein>
    <recommendedName>
        <fullName>Multifunctional procollagen lysine hydroxylase and glycosyltransferase LH3</fullName>
    </recommendedName>
    <domain>
        <recommendedName>
            <fullName>Procollagen-lysine,2-oxoglutarate 5-dioxygenase 3</fullName>
            <ecNumber evidence="1">1.14.11.4</ecNumber>
        </recommendedName>
        <alternativeName>
            <fullName>Lysyl hydroxylase 3</fullName>
            <shortName>LH3</shortName>
        </alternativeName>
    </domain>
    <domain>
        <recommendedName>
            <fullName>Procollagen glycosyltransferase</fullName>
            <ecNumber evidence="1">2.4.1.50</ecNumber>
            <ecNumber evidence="1">2.4.1.66</ecNumber>
        </recommendedName>
        <alternativeName>
            <fullName>Galactosylhydroxylysine-glucosyltransferase</fullName>
        </alternativeName>
        <alternativeName>
            <fullName>Procollagen galactosyltransferase</fullName>
        </alternativeName>
        <alternativeName>
            <fullName>Procollagen glucosyltransferase</fullName>
        </alternativeName>
    </domain>
</protein>